<protein>
    <recommendedName>
        <fullName>Photosystem I reaction center subunit III</fullName>
    </recommendedName>
    <alternativeName>
        <fullName>Light-harvesting complex I 17 kDa protein</fullName>
    </alternativeName>
    <alternativeName>
        <fullName>PSI-F</fullName>
    </alternativeName>
</protein>
<comment type="function">
    <text>Probably participates in efficiency of electron transfer from plastocyanin to P700 (or cytochrome c553 in algae and cyanobacteria). This plastocyanin-docking protein contributes to the specific association of plastocyanin to PSI.</text>
</comment>
<comment type="subcellular location">
    <subcellularLocation>
        <location>Plastid</location>
        <location>Chloroplast thylakoid lumen</location>
    </subcellularLocation>
</comment>
<comment type="similarity">
    <text evidence="2">Belongs to the PsaF family.</text>
</comment>
<organism>
    <name type="scientific">Pisum sativum</name>
    <name type="common">Garden pea</name>
    <name type="synonym">Lathyrus oleraceus</name>
    <dbReference type="NCBI Taxonomy" id="3888"/>
    <lineage>
        <taxon>Eukaryota</taxon>
        <taxon>Viridiplantae</taxon>
        <taxon>Streptophyta</taxon>
        <taxon>Embryophyta</taxon>
        <taxon>Tracheophyta</taxon>
        <taxon>Spermatophyta</taxon>
        <taxon>Magnoliopsida</taxon>
        <taxon>eudicotyledons</taxon>
        <taxon>Gunneridae</taxon>
        <taxon>Pentapetalae</taxon>
        <taxon>rosids</taxon>
        <taxon>fabids</taxon>
        <taxon>Fabales</taxon>
        <taxon>Fabaceae</taxon>
        <taxon>Papilionoideae</taxon>
        <taxon>50 kb inversion clade</taxon>
        <taxon>NPAAA clade</taxon>
        <taxon>Hologalegina</taxon>
        <taxon>IRL clade</taxon>
        <taxon>Fabeae</taxon>
        <taxon>Pisum</taxon>
    </lineage>
</organism>
<proteinExistence type="evidence at protein level"/>
<sequence>AISGLTPCKESKQFAKREKQ</sequence>
<reference key="1">
    <citation type="journal article" date="1988" name="FEBS Lett.">
        <title>N-terminal amino acid sequence analysis of the subunits of pea photosystem I.</title>
        <authorList>
            <person name="Dunn P.P.J."/>
            <person name="Packman L.C."/>
            <person name="Pappin D."/>
            <person name="Gray J.C."/>
        </authorList>
    </citation>
    <scope>PROTEIN SEQUENCE</scope>
</reference>
<name>PSAF_PEA</name>
<gene>
    <name type="primary">PSAF</name>
</gene>
<feature type="chain" id="PRO_0000207750" description="Photosystem I reaction center subunit III">
    <location>
        <begin position="1"/>
        <end position="20" status="greater than"/>
    </location>
</feature>
<feature type="region of interest" description="Disordered" evidence="1">
    <location>
        <begin position="1"/>
        <end position="20"/>
    </location>
</feature>
<feature type="compositionally biased region" description="Basic and acidic residues" evidence="1">
    <location>
        <begin position="9"/>
        <end position="20"/>
    </location>
</feature>
<feature type="sequence variant">
    <original>A</original>
    <variation>D</variation>
    <location>
        <position position="1"/>
    </location>
</feature>
<feature type="non-terminal residue">
    <location>
        <position position="20"/>
    </location>
</feature>
<accession>P20119</accession>
<keyword id="KW-0150">Chloroplast</keyword>
<keyword id="KW-0903">Direct protein sequencing</keyword>
<keyword id="KW-0602">Photosynthesis</keyword>
<keyword id="KW-0603">Photosystem I</keyword>
<keyword id="KW-0934">Plastid</keyword>
<keyword id="KW-0793">Thylakoid</keyword>
<evidence type="ECO:0000256" key="1">
    <source>
        <dbReference type="SAM" id="MobiDB-lite"/>
    </source>
</evidence>
<evidence type="ECO:0000305" key="2"/>
<dbReference type="PIR" id="S00315">
    <property type="entry name" value="S00315"/>
</dbReference>
<dbReference type="DIP" id="DIP-60286N"/>
<dbReference type="IntAct" id="P20119">
    <property type="interactions" value="1"/>
</dbReference>
<dbReference type="GO" id="GO:0009543">
    <property type="term" value="C:chloroplast thylakoid lumen"/>
    <property type="evidence" value="ECO:0007669"/>
    <property type="project" value="UniProtKB-SubCell"/>
</dbReference>
<dbReference type="GO" id="GO:0009522">
    <property type="term" value="C:photosystem I"/>
    <property type="evidence" value="ECO:0007669"/>
    <property type="project" value="UniProtKB-KW"/>
</dbReference>
<dbReference type="GO" id="GO:0015979">
    <property type="term" value="P:photosynthesis"/>
    <property type="evidence" value="ECO:0007669"/>
    <property type="project" value="UniProtKB-KW"/>
</dbReference>